<sequence length="381" mass="41876">MTQTTHHTPDTARQADPFPVKGMDAVVFAVGNAKQAAHYYSTAFGMKLVAYSGPENGSRETASYVLESGSARFVFTSVIKPSTDWGTFLAQHVAEHGDGVVDLAIEVPDARAAHAYAVEHGARSLAEPHEVKDEHGTVVLAAIATYGETRHTLVERTGYDGPYLPGYVAAKPMVAPPAQRVFQAVDHCVGNVELGRMNEWVGFYNKVMGFTNMKEFVGDDIATEYSALMSKVVADGTLKVKFPINEPAIAKKKSQIDEYLEFYGGAGVQHIALNTNDIVATVRAMRAAGVEFLDTPDSYYDTLGEWAGETRVPVDVLRELKILVDRDEDGYLLQIFTKPVQDRPTVFFEMIERHGSMGFGKGNFKALFEAIEREQEKRGNL</sequence>
<organism>
    <name type="scientific">Streptomyces coelicolor (strain ATCC BAA-471 / A3(2) / M145)</name>
    <dbReference type="NCBI Taxonomy" id="100226"/>
    <lineage>
        <taxon>Bacteria</taxon>
        <taxon>Bacillati</taxon>
        <taxon>Actinomycetota</taxon>
        <taxon>Actinomycetes</taxon>
        <taxon>Kitasatosporales</taxon>
        <taxon>Streptomycetaceae</taxon>
        <taxon>Streptomyces</taxon>
        <taxon>Streptomyces albidoflavus group</taxon>
    </lineage>
</organism>
<comment type="catalytic activity">
    <reaction>
        <text>3-(4-hydroxyphenyl)pyruvate + O2 = homogentisate + CO2</text>
        <dbReference type="Rhea" id="RHEA:16189"/>
        <dbReference type="ChEBI" id="CHEBI:15379"/>
        <dbReference type="ChEBI" id="CHEBI:16169"/>
        <dbReference type="ChEBI" id="CHEBI:16526"/>
        <dbReference type="ChEBI" id="CHEBI:36242"/>
        <dbReference type="EC" id="1.13.11.27"/>
    </reaction>
</comment>
<comment type="cofactor">
    <cofactor evidence="1">
        <name>Fe cation</name>
        <dbReference type="ChEBI" id="CHEBI:24875"/>
    </cofactor>
    <text evidence="1">Binds 1 Fe cation per subunit.</text>
</comment>
<comment type="pathway">
    <text>Amino-acid degradation; L-phenylalanine degradation; acetoacetate and fumarate from L-phenylalanine: step 3/6.</text>
</comment>
<comment type="subunit">
    <text evidence="1">Homodimer.</text>
</comment>
<comment type="similarity">
    <text evidence="3">Belongs to the 4HPPD family.</text>
</comment>
<accession>Q9S2F4</accession>
<protein>
    <recommendedName>
        <fullName>4-hydroxyphenylpyruvate dioxygenase</fullName>
        <shortName>4HPPD</shortName>
        <shortName>HPD</shortName>
        <shortName>HPPDase</shortName>
        <ecNumber>1.13.11.27</ecNumber>
    </recommendedName>
</protein>
<evidence type="ECO:0000250" key="1"/>
<evidence type="ECO:0000255" key="2">
    <source>
        <dbReference type="PROSITE-ProRule" id="PRU01163"/>
    </source>
</evidence>
<evidence type="ECO:0000305" key="3"/>
<dbReference type="EC" id="1.13.11.27"/>
<dbReference type="EMBL" id="AL939114">
    <property type="protein sequence ID" value="CAB51008.1"/>
    <property type="molecule type" value="Genomic_DNA"/>
</dbReference>
<dbReference type="PIR" id="T36150">
    <property type="entry name" value="T36150"/>
</dbReference>
<dbReference type="RefSeq" id="NP_627153.1">
    <property type="nucleotide sequence ID" value="NC_003888.3"/>
</dbReference>
<dbReference type="SMR" id="Q9S2F4"/>
<dbReference type="STRING" id="100226.gene:17760538"/>
<dbReference type="PaxDb" id="100226-SCO2927"/>
<dbReference type="KEGG" id="sco:SCO2927"/>
<dbReference type="PATRIC" id="fig|100226.15.peg.2985"/>
<dbReference type="eggNOG" id="COG3185">
    <property type="taxonomic scope" value="Bacteria"/>
</dbReference>
<dbReference type="HOGENOM" id="CLU_034004_1_1_11"/>
<dbReference type="InParanoid" id="Q9S2F4"/>
<dbReference type="OrthoDB" id="9780241at2"/>
<dbReference type="PhylomeDB" id="Q9S2F4"/>
<dbReference type="UniPathway" id="UPA00139">
    <property type="reaction ID" value="UER00362"/>
</dbReference>
<dbReference type="Proteomes" id="UP000001973">
    <property type="component" value="Chromosome"/>
</dbReference>
<dbReference type="GO" id="GO:0003868">
    <property type="term" value="F:4-hydroxyphenylpyruvate dioxygenase activity"/>
    <property type="evidence" value="ECO:0000318"/>
    <property type="project" value="GO_Central"/>
</dbReference>
<dbReference type="GO" id="GO:0046872">
    <property type="term" value="F:metal ion binding"/>
    <property type="evidence" value="ECO:0007669"/>
    <property type="project" value="UniProtKB-KW"/>
</dbReference>
<dbReference type="GO" id="GO:0006559">
    <property type="term" value="P:L-phenylalanine catabolic process"/>
    <property type="evidence" value="ECO:0007669"/>
    <property type="project" value="UniProtKB-UniPathway"/>
</dbReference>
<dbReference type="GO" id="GO:0006572">
    <property type="term" value="P:tyrosine catabolic process"/>
    <property type="evidence" value="ECO:0000318"/>
    <property type="project" value="GO_Central"/>
</dbReference>
<dbReference type="CDD" id="cd07250">
    <property type="entry name" value="HPPD_C_like"/>
    <property type="match status" value="1"/>
</dbReference>
<dbReference type="CDD" id="cd08342">
    <property type="entry name" value="HPPD_N_like"/>
    <property type="match status" value="1"/>
</dbReference>
<dbReference type="FunFam" id="3.10.180.10:FF:000001">
    <property type="entry name" value="4-hydroxyphenylpyruvate dioxygenase"/>
    <property type="match status" value="1"/>
</dbReference>
<dbReference type="FunFam" id="3.10.180.10:FF:000052">
    <property type="entry name" value="4-hydroxyphenylpyruvate dioxygenase"/>
    <property type="match status" value="1"/>
</dbReference>
<dbReference type="Gene3D" id="3.10.180.10">
    <property type="entry name" value="2,3-Dihydroxybiphenyl 1,2-Dioxygenase, domain 1"/>
    <property type="match status" value="2"/>
</dbReference>
<dbReference type="InterPro" id="IPR005956">
    <property type="entry name" value="4OHPhenylPyrv_dOase"/>
</dbReference>
<dbReference type="InterPro" id="IPR041735">
    <property type="entry name" value="4OHPhenylPyrv_dOase_C"/>
</dbReference>
<dbReference type="InterPro" id="IPR041736">
    <property type="entry name" value="4OHPhenylPyrv_dOase_N"/>
</dbReference>
<dbReference type="InterPro" id="IPR029068">
    <property type="entry name" value="Glyas_Bleomycin-R_OHBP_Dase"/>
</dbReference>
<dbReference type="InterPro" id="IPR004360">
    <property type="entry name" value="Glyas_Fos-R_dOase_dom"/>
</dbReference>
<dbReference type="InterPro" id="IPR037523">
    <property type="entry name" value="VOC"/>
</dbReference>
<dbReference type="NCBIfam" id="TIGR01263">
    <property type="entry name" value="4HPPD"/>
    <property type="match status" value="1"/>
</dbReference>
<dbReference type="PANTHER" id="PTHR11959">
    <property type="entry name" value="4-HYDROXYPHENYLPYRUVATE DIOXYGENASE"/>
    <property type="match status" value="1"/>
</dbReference>
<dbReference type="PANTHER" id="PTHR11959:SF1">
    <property type="entry name" value="4-HYDROXYPHENYLPYRUVATE DIOXYGENASE"/>
    <property type="match status" value="1"/>
</dbReference>
<dbReference type="Pfam" id="PF00903">
    <property type="entry name" value="Glyoxalase"/>
    <property type="match status" value="2"/>
</dbReference>
<dbReference type="PIRSF" id="PIRSF009283">
    <property type="entry name" value="HPP_dOase"/>
    <property type="match status" value="1"/>
</dbReference>
<dbReference type="SUPFAM" id="SSF54593">
    <property type="entry name" value="Glyoxalase/Bleomycin resistance protein/Dihydroxybiphenyl dioxygenase"/>
    <property type="match status" value="1"/>
</dbReference>
<dbReference type="PROSITE" id="PS51819">
    <property type="entry name" value="VOC"/>
    <property type="match status" value="2"/>
</dbReference>
<gene>
    <name type="primary">hpd</name>
    <name type="ordered locus">SCO2927</name>
    <name type="ORF">SCE19A.27c</name>
</gene>
<proteinExistence type="inferred from homology"/>
<name>HPPD_STRCO</name>
<keyword id="KW-0223">Dioxygenase</keyword>
<keyword id="KW-0408">Iron</keyword>
<keyword id="KW-0479">Metal-binding</keyword>
<keyword id="KW-0560">Oxidoreductase</keyword>
<keyword id="KW-0585">Phenylalanine catabolism</keyword>
<keyword id="KW-1185">Reference proteome</keyword>
<keyword id="KW-0677">Repeat</keyword>
<keyword id="KW-0828">Tyrosine catabolism</keyword>
<reference key="1">
    <citation type="journal article" date="2002" name="Nature">
        <title>Complete genome sequence of the model actinomycete Streptomyces coelicolor A3(2).</title>
        <authorList>
            <person name="Bentley S.D."/>
            <person name="Chater K.F."/>
            <person name="Cerdeno-Tarraga A.-M."/>
            <person name="Challis G.L."/>
            <person name="Thomson N.R."/>
            <person name="James K.D."/>
            <person name="Harris D.E."/>
            <person name="Quail M.A."/>
            <person name="Kieser H."/>
            <person name="Harper D."/>
            <person name="Bateman A."/>
            <person name="Brown S."/>
            <person name="Chandra G."/>
            <person name="Chen C.W."/>
            <person name="Collins M."/>
            <person name="Cronin A."/>
            <person name="Fraser A."/>
            <person name="Goble A."/>
            <person name="Hidalgo J."/>
            <person name="Hornsby T."/>
            <person name="Howarth S."/>
            <person name="Huang C.-H."/>
            <person name="Kieser T."/>
            <person name="Larke L."/>
            <person name="Murphy L.D."/>
            <person name="Oliver K."/>
            <person name="O'Neil S."/>
            <person name="Rabbinowitsch E."/>
            <person name="Rajandream M.A."/>
            <person name="Rutherford K.M."/>
            <person name="Rutter S."/>
            <person name="Seeger K."/>
            <person name="Saunders D."/>
            <person name="Sharp S."/>
            <person name="Squares R."/>
            <person name="Squares S."/>
            <person name="Taylor K."/>
            <person name="Warren T."/>
            <person name="Wietzorrek A."/>
            <person name="Woodward J.R."/>
            <person name="Barrell B.G."/>
            <person name="Parkhill J."/>
            <person name="Hopwood D.A."/>
        </authorList>
    </citation>
    <scope>NUCLEOTIDE SEQUENCE [LARGE SCALE GENOMIC DNA]</scope>
    <source>
        <strain>ATCC BAA-471 / A3(2) / M145</strain>
    </source>
</reference>
<feature type="chain" id="PRO_0000088410" description="4-hydroxyphenylpyruvate dioxygenase">
    <location>
        <begin position="1"/>
        <end position="381"/>
    </location>
</feature>
<feature type="domain" description="VOC 1" evidence="2">
    <location>
        <begin position="22"/>
        <end position="156"/>
    </location>
</feature>
<feature type="domain" description="VOC 2" evidence="2">
    <location>
        <begin position="184"/>
        <end position="338"/>
    </location>
</feature>
<feature type="binding site" evidence="1">
    <location>
        <position position="187"/>
    </location>
    <ligand>
        <name>Fe cation</name>
        <dbReference type="ChEBI" id="CHEBI:24875"/>
    </ligand>
</feature>
<feature type="binding site" evidence="1">
    <location>
        <position position="270"/>
    </location>
    <ligand>
        <name>Fe cation</name>
        <dbReference type="ChEBI" id="CHEBI:24875"/>
    </ligand>
</feature>
<feature type="binding site" evidence="1">
    <location>
        <position position="349"/>
    </location>
    <ligand>
        <name>Fe cation</name>
        <dbReference type="ChEBI" id="CHEBI:24875"/>
    </ligand>
</feature>